<accession>A1AX75</accession>
<comment type="function">
    <text evidence="1">DNA-dependent RNA polymerase catalyzes the transcription of DNA into RNA using the four ribonucleoside triphosphates as substrates.</text>
</comment>
<comment type="catalytic activity">
    <reaction evidence="1">
        <text>RNA(n) + a ribonucleoside 5'-triphosphate = RNA(n+1) + diphosphate</text>
        <dbReference type="Rhea" id="RHEA:21248"/>
        <dbReference type="Rhea" id="RHEA-COMP:14527"/>
        <dbReference type="Rhea" id="RHEA-COMP:17342"/>
        <dbReference type="ChEBI" id="CHEBI:33019"/>
        <dbReference type="ChEBI" id="CHEBI:61557"/>
        <dbReference type="ChEBI" id="CHEBI:140395"/>
        <dbReference type="EC" id="2.7.7.6"/>
    </reaction>
</comment>
<comment type="subunit">
    <text evidence="1">The RNAP catalytic core consists of 2 alpha, 1 beta, 1 beta' and 1 omega subunit. When a sigma factor is associated with the core the holoenzyme is formed, which can initiate transcription.</text>
</comment>
<comment type="similarity">
    <text evidence="1">Belongs to the RNA polymerase beta chain family.</text>
</comment>
<keyword id="KW-0240">DNA-directed RNA polymerase</keyword>
<keyword id="KW-0548">Nucleotidyltransferase</keyword>
<keyword id="KW-0804">Transcription</keyword>
<keyword id="KW-0808">Transferase</keyword>
<reference key="1">
    <citation type="journal article" date="2007" name="Science">
        <title>The Calyptogena magnifica chemoautotrophic symbiont genome.</title>
        <authorList>
            <person name="Newton I.L.G."/>
            <person name="Woyke T."/>
            <person name="Auchtung T.A."/>
            <person name="Dilly G.F."/>
            <person name="Dutton R.J."/>
            <person name="Fisher M.C."/>
            <person name="Fontanez K.M."/>
            <person name="Lau E."/>
            <person name="Stewart F.J."/>
            <person name="Richardson P.M."/>
            <person name="Barry K.W."/>
            <person name="Saunders E."/>
            <person name="Detter J.C."/>
            <person name="Wu D."/>
            <person name="Eisen J.A."/>
            <person name="Cavanaugh C.M."/>
        </authorList>
    </citation>
    <scope>NUCLEOTIDE SEQUENCE [LARGE SCALE GENOMIC DNA]</scope>
</reference>
<protein>
    <recommendedName>
        <fullName evidence="1">DNA-directed RNA polymerase subunit beta</fullName>
        <shortName evidence="1">RNAP subunit beta</shortName>
        <ecNumber evidence="1">2.7.7.6</ecNumber>
    </recommendedName>
    <alternativeName>
        <fullName evidence="1">RNA polymerase subunit beta</fullName>
    </alternativeName>
    <alternativeName>
        <fullName evidence="1">Transcriptase subunit beta</fullName>
    </alternativeName>
</protein>
<sequence>MAYSFTEKKRIRNNFGSRESILTEPDLLAIQIDSFNSFIQKDSKTKQDIGLHAVFQSVFPITAVNGYAQIEYVDYELQEPKFNVEECKLRGVTFASTLRVKLSLVLFDKNGSTLKKKRKIKQIIEEDIYLGQLPLMTETGTFVINGTERVVVSQLHRSPGVIFEHDKGKTHSSGKILFSSRIIPYRGSWLDFEYDHHEHLYVRIDRRRKLPVTTLLRAMGLSSEGILETFFEKTTIKLKAKSCDLNMVPIRLQRTIAEFDIVANQDVIVEKGRRITAKHVKLLKKVGIKSINVPLEYLLDKVISADIFDKDTGEILISANTIILEEVLELLNINKIKKIEILYINASETGAYISDTLRLDETQTEIEARMSIYHVMRPGEPATEDAVNLLFNNLFFKNDRYDLSKVGRMKLNRRLGIGSETGEHVLTNDDIISVIKLLINIKDGNDSVDDVDTLANRRVRAIGEMIENQFRVGLVRVEKVVREGLNLAETDELTPQDLINSKPVSAAVREFFGSSQLSQFMDQVNPLSGVTHKRRISALGPGGLTRERAGFEVRDVHPSHYGRLCPIETPEGPNIGLINTLAVYAKTNSYGFLETPYQVVKNGKVTKEVVYVSAIDEITHTIAQVNAIVNDKGKLMSDLISCRHKNEFVLVNSSKVTLIDIDSKQIASVAASLIPFLEHDDANRALMGSNMQRQAVPVLKAEKPLVGTGIERVVATDSRVCVTAKHSGVVEAVDASRIVIRVDSKKTKASELGVDIYNLTKYSRSNQNTCINQKPLVKTGDKISAADVLADGPSTDMGELALGQNMKIAFMPWNGYNFEDSILISEKVIQEDRYTTIHIEELTAYSRDTKLGPEEITADIPNVSELALAKLDEVGVVYVGARVKGGDILVGKVTPKSETVLSPEEKLLRAIFGEKANNVKDSSLRVGASKSGVVIDVQIFTRDRVEKDDRALSIDAERLERIKKDIDDEFGIIDGDIFRRVRLKLSGNMLSKVAGDIKAGEKLSAKLMKKLDNKDISKLKVEDAAVNKEVAALIKQAKAKQIEFKKFFEEEKAKINEGAELPPGVMKMVKVYVATSKTLQVGDKMAGRHGNKGVISRVSPVEDMPYLVDGSTIDVVLNPLGVPSRMNVGQVLEVHLGYAAKGLGYKITAMLDEKRTDMVKQIRDFLDEVYNSYGKQENLASFSDEEIIELASNLREGVPMATPVFDGIKEKDIKSLLKLADLPESGQEQLYDGRTGEPFDRHVTVGYMHMLKLNHLVNDKMHARSTGPYSLVTQQPLSGKAQFGGQRFGEMEVWALEAYGAAHTLREMLTVKSDDVGGRAKMYKSIVDGKNLTESIMPESFNVLVKEIRSLGIDVELEQH</sequence>
<feature type="chain" id="PRO_0000300393" description="DNA-directed RNA polymerase subunit beta">
    <location>
        <begin position="1"/>
        <end position="1360"/>
    </location>
</feature>
<dbReference type="EC" id="2.7.7.6" evidence="1"/>
<dbReference type="EMBL" id="CP000488">
    <property type="protein sequence ID" value="ABL02532.1"/>
    <property type="molecule type" value="Genomic_DNA"/>
</dbReference>
<dbReference type="RefSeq" id="WP_011738157.1">
    <property type="nucleotide sequence ID" value="NC_008610.1"/>
</dbReference>
<dbReference type="SMR" id="A1AX75"/>
<dbReference type="STRING" id="413404.Rmag_0811"/>
<dbReference type="KEGG" id="rma:Rmag_0811"/>
<dbReference type="eggNOG" id="COG0085">
    <property type="taxonomic scope" value="Bacteria"/>
</dbReference>
<dbReference type="HOGENOM" id="CLU_000524_4_0_6"/>
<dbReference type="OrthoDB" id="9803954at2"/>
<dbReference type="Proteomes" id="UP000002587">
    <property type="component" value="Chromosome"/>
</dbReference>
<dbReference type="GO" id="GO:0000428">
    <property type="term" value="C:DNA-directed RNA polymerase complex"/>
    <property type="evidence" value="ECO:0007669"/>
    <property type="project" value="UniProtKB-KW"/>
</dbReference>
<dbReference type="GO" id="GO:0003677">
    <property type="term" value="F:DNA binding"/>
    <property type="evidence" value="ECO:0007669"/>
    <property type="project" value="UniProtKB-UniRule"/>
</dbReference>
<dbReference type="GO" id="GO:0003899">
    <property type="term" value="F:DNA-directed RNA polymerase activity"/>
    <property type="evidence" value="ECO:0007669"/>
    <property type="project" value="UniProtKB-UniRule"/>
</dbReference>
<dbReference type="GO" id="GO:0032549">
    <property type="term" value="F:ribonucleoside binding"/>
    <property type="evidence" value="ECO:0007669"/>
    <property type="project" value="InterPro"/>
</dbReference>
<dbReference type="GO" id="GO:0006351">
    <property type="term" value="P:DNA-templated transcription"/>
    <property type="evidence" value="ECO:0007669"/>
    <property type="project" value="UniProtKB-UniRule"/>
</dbReference>
<dbReference type="CDD" id="cd00653">
    <property type="entry name" value="RNA_pol_B_RPB2"/>
    <property type="match status" value="1"/>
</dbReference>
<dbReference type="FunFam" id="2.40.50.100:FF:000006">
    <property type="entry name" value="DNA-directed RNA polymerase subunit beta"/>
    <property type="match status" value="1"/>
</dbReference>
<dbReference type="FunFam" id="3.90.1800.10:FF:000001">
    <property type="entry name" value="DNA-directed RNA polymerase subunit beta"/>
    <property type="match status" value="1"/>
</dbReference>
<dbReference type="Gene3D" id="2.40.50.100">
    <property type="match status" value="1"/>
</dbReference>
<dbReference type="Gene3D" id="2.40.50.150">
    <property type="match status" value="1"/>
</dbReference>
<dbReference type="Gene3D" id="3.90.1100.10">
    <property type="match status" value="2"/>
</dbReference>
<dbReference type="Gene3D" id="2.30.150.10">
    <property type="entry name" value="DNA-directed RNA polymerase, beta subunit, external 1 domain"/>
    <property type="match status" value="1"/>
</dbReference>
<dbReference type="Gene3D" id="2.40.270.10">
    <property type="entry name" value="DNA-directed RNA polymerase, subunit 2, domain 6"/>
    <property type="match status" value="2"/>
</dbReference>
<dbReference type="Gene3D" id="3.90.1800.10">
    <property type="entry name" value="RNA polymerase alpha subunit dimerisation domain"/>
    <property type="match status" value="1"/>
</dbReference>
<dbReference type="Gene3D" id="3.90.1110.10">
    <property type="entry name" value="RNA polymerase Rpb2, domain 2"/>
    <property type="match status" value="2"/>
</dbReference>
<dbReference type="HAMAP" id="MF_01321">
    <property type="entry name" value="RNApol_bact_RpoB"/>
    <property type="match status" value="1"/>
</dbReference>
<dbReference type="InterPro" id="IPR042107">
    <property type="entry name" value="DNA-dir_RNA_pol_bsu_ext_1_sf"/>
</dbReference>
<dbReference type="InterPro" id="IPR019462">
    <property type="entry name" value="DNA-dir_RNA_pol_bsu_external_1"/>
</dbReference>
<dbReference type="InterPro" id="IPR015712">
    <property type="entry name" value="DNA-dir_RNA_pol_su2"/>
</dbReference>
<dbReference type="InterPro" id="IPR007120">
    <property type="entry name" value="DNA-dir_RNAP_su2_dom"/>
</dbReference>
<dbReference type="InterPro" id="IPR037033">
    <property type="entry name" value="DNA-dir_RNAP_su2_hyb_sf"/>
</dbReference>
<dbReference type="InterPro" id="IPR010243">
    <property type="entry name" value="RNA_pol_bsu_bac"/>
</dbReference>
<dbReference type="InterPro" id="IPR007121">
    <property type="entry name" value="RNA_pol_bsu_CS"/>
</dbReference>
<dbReference type="InterPro" id="IPR007644">
    <property type="entry name" value="RNA_pol_bsu_protrusion"/>
</dbReference>
<dbReference type="InterPro" id="IPR007642">
    <property type="entry name" value="RNA_pol_Rpb2_2"/>
</dbReference>
<dbReference type="InterPro" id="IPR037034">
    <property type="entry name" value="RNA_pol_Rpb2_2_sf"/>
</dbReference>
<dbReference type="InterPro" id="IPR007645">
    <property type="entry name" value="RNA_pol_Rpb2_3"/>
</dbReference>
<dbReference type="InterPro" id="IPR007641">
    <property type="entry name" value="RNA_pol_Rpb2_7"/>
</dbReference>
<dbReference type="InterPro" id="IPR014724">
    <property type="entry name" value="RNA_pol_RPB2_OB-fold"/>
</dbReference>
<dbReference type="NCBIfam" id="NF001616">
    <property type="entry name" value="PRK00405.1"/>
    <property type="match status" value="1"/>
</dbReference>
<dbReference type="NCBIfam" id="TIGR02013">
    <property type="entry name" value="rpoB"/>
    <property type="match status" value="1"/>
</dbReference>
<dbReference type="PANTHER" id="PTHR20856">
    <property type="entry name" value="DNA-DIRECTED RNA POLYMERASE I SUBUNIT 2"/>
    <property type="match status" value="1"/>
</dbReference>
<dbReference type="Pfam" id="PF04563">
    <property type="entry name" value="RNA_pol_Rpb2_1"/>
    <property type="match status" value="1"/>
</dbReference>
<dbReference type="Pfam" id="PF04561">
    <property type="entry name" value="RNA_pol_Rpb2_2"/>
    <property type="match status" value="2"/>
</dbReference>
<dbReference type="Pfam" id="PF04565">
    <property type="entry name" value="RNA_pol_Rpb2_3"/>
    <property type="match status" value="1"/>
</dbReference>
<dbReference type="Pfam" id="PF10385">
    <property type="entry name" value="RNA_pol_Rpb2_45"/>
    <property type="match status" value="1"/>
</dbReference>
<dbReference type="Pfam" id="PF00562">
    <property type="entry name" value="RNA_pol_Rpb2_6"/>
    <property type="match status" value="1"/>
</dbReference>
<dbReference type="Pfam" id="PF04560">
    <property type="entry name" value="RNA_pol_Rpb2_7"/>
    <property type="match status" value="1"/>
</dbReference>
<dbReference type="SUPFAM" id="SSF64484">
    <property type="entry name" value="beta and beta-prime subunits of DNA dependent RNA-polymerase"/>
    <property type="match status" value="1"/>
</dbReference>
<dbReference type="PROSITE" id="PS01166">
    <property type="entry name" value="RNA_POL_BETA"/>
    <property type="match status" value="1"/>
</dbReference>
<evidence type="ECO:0000255" key="1">
    <source>
        <dbReference type="HAMAP-Rule" id="MF_01321"/>
    </source>
</evidence>
<gene>
    <name evidence="1" type="primary">rpoB</name>
    <name type="ordered locus">Rmag_0811</name>
</gene>
<name>RPOB_RUTMC</name>
<organism>
    <name type="scientific">Ruthia magnifica subsp. Calyptogena magnifica</name>
    <dbReference type="NCBI Taxonomy" id="413404"/>
    <lineage>
        <taxon>Bacteria</taxon>
        <taxon>Pseudomonadati</taxon>
        <taxon>Pseudomonadota</taxon>
        <taxon>Gammaproteobacteria</taxon>
        <taxon>Candidatus Pseudothioglobaceae</taxon>
        <taxon>Candidatus Ruthturnera</taxon>
    </lineage>
</organism>
<proteinExistence type="inferred from homology"/>